<organism>
    <name type="scientific">Zea mays</name>
    <name type="common">Maize</name>
    <dbReference type="NCBI Taxonomy" id="4577"/>
    <lineage>
        <taxon>Eukaryota</taxon>
        <taxon>Viridiplantae</taxon>
        <taxon>Streptophyta</taxon>
        <taxon>Embryophyta</taxon>
        <taxon>Tracheophyta</taxon>
        <taxon>Spermatophyta</taxon>
        <taxon>Magnoliopsida</taxon>
        <taxon>Liliopsida</taxon>
        <taxon>Poales</taxon>
        <taxon>Poaceae</taxon>
        <taxon>PACMAD clade</taxon>
        <taxon>Panicoideae</taxon>
        <taxon>Andropogonodae</taxon>
        <taxon>Andropogoneae</taxon>
        <taxon>Tripsacinae</taxon>
        <taxon>Zea</taxon>
    </lineage>
</organism>
<comment type="function">
    <text evidence="2 8">Involved in phosphocholine biosynthesis (By similarity). Catalyzes the N-methylation of phosphoethanolamine, phosphomonomethylethanolamine and phosphodimethylethanolamine, the three methylation steps required to convert phosphoethanolamine to phosphocholine (PC) (By similarity). May be involved in root development (Probable).</text>
</comment>
<comment type="catalytic activity">
    <reaction evidence="2">
        <text>phosphoethanolamine + S-adenosyl-L-methionine = N-methylethanolamine phosphate + S-adenosyl-L-homocysteine + H(+)</text>
        <dbReference type="Rhea" id="RHEA:20365"/>
        <dbReference type="ChEBI" id="CHEBI:15378"/>
        <dbReference type="ChEBI" id="CHEBI:57781"/>
        <dbReference type="ChEBI" id="CHEBI:57856"/>
        <dbReference type="ChEBI" id="CHEBI:58190"/>
        <dbReference type="ChEBI" id="CHEBI:59789"/>
        <dbReference type="EC" id="2.1.1.103"/>
    </reaction>
    <physiologicalReaction direction="left-to-right" evidence="2">
        <dbReference type="Rhea" id="RHEA:20366"/>
    </physiologicalReaction>
</comment>
<comment type="catalytic activity">
    <reaction evidence="2">
        <text>N-methylethanolamine phosphate + S-adenosyl-L-methionine = N,N-dimethylethanolamine phosphate + S-adenosyl-L-homocysteine + H(+)</text>
        <dbReference type="Rhea" id="RHEA:25321"/>
        <dbReference type="ChEBI" id="CHEBI:15378"/>
        <dbReference type="ChEBI" id="CHEBI:57781"/>
        <dbReference type="ChEBI" id="CHEBI:57856"/>
        <dbReference type="ChEBI" id="CHEBI:58641"/>
        <dbReference type="ChEBI" id="CHEBI:59789"/>
        <dbReference type="EC" id="2.1.1.103"/>
    </reaction>
    <physiologicalReaction direction="left-to-right" evidence="2">
        <dbReference type="Rhea" id="RHEA:25322"/>
    </physiologicalReaction>
</comment>
<comment type="catalytic activity">
    <reaction evidence="2">
        <text>N,N-dimethylethanolamine phosphate + S-adenosyl-L-methionine = phosphocholine + S-adenosyl-L-homocysteine + H(+)</text>
        <dbReference type="Rhea" id="RHEA:25325"/>
        <dbReference type="ChEBI" id="CHEBI:15378"/>
        <dbReference type="ChEBI" id="CHEBI:57856"/>
        <dbReference type="ChEBI" id="CHEBI:58641"/>
        <dbReference type="ChEBI" id="CHEBI:59789"/>
        <dbReference type="ChEBI" id="CHEBI:295975"/>
        <dbReference type="EC" id="2.1.1.103"/>
    </reaction>
    <physiologicalReaction direction="left-to-right" evidence="2">
        <dbReference type="Rhea" id="RHEA:25326"/>
    </physiologicalReaction>
</comment>
<comment type="pathway">
    <text evidence="7">Phospholipid metabolism; phosphatidylcholine biosynthesis; phosphocholine from phosphoethanolamine: step 1/1.</text>
</comment>
<comment type="induction">
    <text evidence="5">Induced by salt stress (PubMed:17914189). Down-regulated by high temperature (PubMed:17914189).</text>
</comment>
<comment type="miscellaneous">
    <text evidence="5">Arabidopsis plants over-expressing maize PEAMT1 display enhanced salt tolerance, root length and silique number.</text>
</comment>
<comment type="similarity">
    <text evidence="4">Belongs to the class I-like SAM-binding methyltransferase superfamily. PEAMT family.</text>
</comment>
<comment type="sequence caution" evidence="7">
    <conflict type="miscellaneous discrepancy">
        <sequence resource="EMBL-CDS" id="AAV67950"/>
    </conflict>
    <text>Sequencing errors.</text>
</comment>
<protein>
    <recommendedName>
        <fullName evidence="6">Phosphoethanolamine N-methyltransferase 1</fullName>
        <shortName evidence="6">ZmPEAMT1</shortName>
        <ecNumber evidence="2">2.1.1.103</ecNumber>
    </recommendedName>
</protein>
<keyword id="KW-0489">Methyltransferase</keyword>
<keyword id="KW-1185">Reference proteome</keyword>
<keyword id="KW-0808">Transferase</keyword>
<gene>
    <name evidence="6" type="primary">PEAMT1</name>
    <name evidence="9" type="ORF">ZEAMMB73_Zm00001d043771</name>
</gene>
<accession>A0A1D6NER6</accession>
<accession>Q5SDQ0</accession>
<proteinExistence type="evidence at transcript level"/>
<feature type="chain" id="PRO_0000458646" description="Phosphoethanolamine N-methyltransferase 1">
    <location>
        <begin position="1"/>
        <end position="501"/>
    </location>
</feature>
<feature type="binding site" evidence="3">
    <location>
        <position position="72"/>
    </location>
    <ligand>
        <name>S-adenosyl-L-homocysteine</name>
        <dbReference type="ChEBI" id="CHEBI:57856"/>
    </ligand>
</feature>
<feature type="binding site" evidence="3">
    <location>
        <position position="77"/>
    </location>
    <ligand>
        <name>S-adenosyl-L-homocysteine</name>
        <dbReference type="ChEBI" id="CHEBI:57856"/>
    </ligand>
</feature>
<feature type="binding site" evidence="3">
    <location>
        <position position="93"/>
    </location>
    <ligand>
        <name>S-adenosyl-L-homocysteine</name>
        <dbReference type="ChEBI" id="CHEBI:57856"/>
    </ligand>
</feature>
<feature type="binding site" evidence="3">
    <location>
        <position position="118"/>
    </location>
    <ligand>
        <name>S-adenosyl-L-homocysteine</name>
        <dbReference type="ChEBI" id="CHEBI:57856"/>
    </ligand>
</feature>
<feature type="binding site" evidence="3">
    <location>
        <position position="119"/>
    </location>
    <ligand>
        <name>S-adenosyl-L-homocysteine</name>
        <dbReference type="ChEBI" id="CHEBI:57856"/>
    </ligand>
</feature>
<feature type="binding site" evidence="3">
    <location>
        <position position="137"/>
    </location>
    <ligand>
        <name>S-adenosyl-L-homocysteine</name>
        <dbReference type="ChEBI" id="CHEBI:57856"/>
    </ligand>
</feature>
<feature type="binding site" evidence="3">
    <location>
        <position position="170"/>
    </location>
    <ligand>
        <name>phosphocholine</name>
        <dbReference type="ChEBI" id="CHEBI:295975"/>
    </ligand>
</feature>
<feature type="binding site" evidence="3">
    <location>
        <position position="175"/>
    </location>
    <ligand>
        <name>phosphocholine</name>
        <dbReference type="ChEBI" id="CHEBI:295975"/>
    </ligand>
</feature>
<feature type="binding site" evidence="3">
    <location>
        <position position="176"/>
    </location>
    <ligand>
        <name>phosphocholine</name>
        <dbReference type="ChEBI" id="CHEBI:295975"/>
    </ligand>
</feature>
<feature type="binding site" evidence="3">
    <location>
        <position position="180"/>
    </location>
    <ligand>
        <name>phosphocholine</name>
        <dbReference type="ChEBI" id="CHEBI:295975"/>
    </ligand>
</feature>
<feature type="binding site" evidence="3">
    <location>
        <position position="187"/>
    </location>
    <ligand>
        <name>phosphocholine</name>
        <dbReference type="ChEBI" id="CHEBI:295975"/>
    </ligand>
</feature>
<feature type="binding site" evidence="1">
    <location>
        <begin position="256"/>
        <end position="257"/>
    </location>
    <ligand>
        <name>N-methylethanolamine phosphate</name>
        <dbReference type="ChEBI" id="CHEBI:57781"/>
    </ligand>
</feature>
<feature type="binding site" evidence="1">
    <location>
        <position position="265"/>
    </location>
    <ligand>
        <name>N-methylethanolamine phosphate</name>
        <dbReference type="ChEBI" id="CHEBI:57781"/>
    </ligand>
</feature>
<feature type="binding site" evidence="3">
    <location>
        <position position="265"/>
    </location>
    <ligand>
        <name>phosphocholine</name>
        <dbReference type="ChEBI" id="CHEBI:295975"/>
    </ligand>
</feature>
<feature type="binding site" evidence="3">
    <location>
        <position position="274"/>
    </location>
    <ligand>
        <name>S-adenosyl-L-homocysteine</name>
        <dbReference type="ChEBI" id="CHEBI:57856"/>
    </ligand>
</feature>
<feature type="binding site" evidence="3">
    <location>
        <position position="275"/>
    </location>
    <ligand>
        <name>S-adenosyl-L-homocysteine</name>
        <dbReference type="ChEBI" id="CHEBI:57856"/>
    </ligand>
</feature>
<feature type="binding site" evidence="3">
    <location>
        <position position="301"/>
    </location>
    <ligand>
        <name>S-adenosyl-L-homocysteine</name>
        <dbReference type="ChEBI" id="CHEBI:57856"/>
    </ligand>
</feature>
<feature type="binding site" evidence="3">
    <location>
        <position position="323"/>
    </location>
    <ligand>
        <name>S-adenosyl-L-homocysteine</name>
        <dbReference type="ChEBI" id="CHEBI:57856"/>
    </ligand>
</feature>
<feature type="binding site" evidence="3">
    <location>
        <position position="349"/>
    </location>
    <ligand>
        <name>S-adenosyl-L-homocysteine</name>
        <dbReference type="ChEBI" id="CHEBI:57856"/>
    </ligand>
</feature>
<feature type="binding site" evidence="3">
    <location>
        <position position="350"/>
    </location>
    <ligand>
        <name>S-adenosyl-L-homocysteine</name>
        <dbReference type="ChEBI" id="CHEBI:57856"/>
    </ligand>
</feature>
<feature type="binding site" evidence="1">
    <location>
        <position position="366"/>
    </location>
    <ligand>
        <name>S-adenosyl-L-homocysteine</name>
        <dbReference type="ChEBI" id="CHEBI:57856"/>
    </ligand>
</feature>
<feature type="binding site" evidence="1">
    <location>
        <position position="397"/>
    </location>
    <ligand>
        <name>N-methylethanolamine phosphate</name>
        <dbReference type="ChEBI" id="CHEBI:57781"/>
    </ligand>
</feature>
<feature type="binding site" evidence="3">
    <location>
        <position position="397"/>
    </location>
    <ligand>
        <name>phosphocholine</name>
        <dbReference type="ChEBI" id="CHEBI:295975"/>
    </ligand>
</feature>
<feature type="binding site" evidence="1">
    <location>
        <position position="411"/>
    </location>
    <ligand>
        <name>N-methylethanolamine phosphate</name>
        <dbReference type="ChEBI" id="CHEBI:57781"/>
    </ligand>
</feature>
<feature type="binding site" evidence="3">
    <location>
        <position position="411"/>
    </location>
    <ligand>
        <name>phosphocholine</name>
        <dbReference type="ChEBI" id="CHEBI:295975"/>
    </ligand>
</feature>
<feature type="binding site" evidence="1">
    <location>
        <begin position="415"/>
        <end position="417"/>
    </location>
    <ligand>
        <name>N-methylethanolamine phosphate</name>
        <dbReference type="ChEBI" id="CHEBI:57781"/>
    </ligand>
</feature>
<feature type="binding site" evidence="3">
    <location>
        <position position="415"/>
    </location>
    <ligand>
        <name>phosphocholine</name>
        <dbReference type="ChEBI" id="CHEBI:295975"/>
    </ligand>
</feature>
<feature type="binding site" evidence="3">
    <location>
        <position position="417"/>
    </location>
    <ligand>
        <name>phosphocholine</name>
        <dbReference type="ChEBI" id="CHEBI:295975"/>
    </ligand>
</feature>
<feature type="binding site" evidence="1">
    <location>
        <position position="483"/>
    </location>
    <ligand>
        <name>N-methylethanolamine phosphate</name>
        <dbReference type="ChEBI" id="CHEBI:57781"/>
    </ligand>
</feature>
<feature type="binding site" evidence="3">
    <location>
        <position position="483"/>
    </location>
    <ligand>
        <name>phosphocholine</name>
        <dbReference type="ChEBI" id="CHEBI:295975"/>
    </ligand>
</feature>
<reference key="1">
    <citation type="journal article" date="2007" name="Mol. Biotechnol.">
        <title>Cloning, characterization, and transformation of the phosphoethanolamine N-methyltransferase gene (ZmPEAMT1) in maize (Zea mays L.).</title>
        <authorList>
            <person name="Wu S."/>
            <person name="Yu Z."/>
            <person name="Wang F."/>
            <person name="Li W."/>
            <person name="Ye C."/>
            <person name="Li J."/>
            <person name="Tang J."/>
            <person name="Ding J."/>
            <person name="Zhao J."/>
            <person name="Wang B."/>
        </authorList>
    </citation>
    <scope>NUCLEOTIDE SEQUENCE [MRNA]</scope>
    <scope>FUNCTION</scope>
    <scope>INDUCTION</scope>
</reference>
<reference key="2">
    <citation type="journal article" date="2009" name="Science">
        <title>The B73 maize genome: complexity, diversity, and dynamics.</title>
        <authorList>
            <person name="Schnable P.S."/>
            <person name="Ware D."/>
            <person name="Fulton R.S."/>
            <person name="Stein J.C."/>
            <person name="Wei F."/>
            <person name="Pasternak S."/>
            <person name="Liang C."/>
            <person name="Zhang J."/>
            <person name="Fulton L."/>
            <person name="Graves T.A."/>
            <person name="Minx P."/>
            <person name="Reily A.D."/>
            <person name="Courtney L."/>
            <person name="Kruchowski S.S."/>
            <person name="Tomlinson C."/>
            <person name="Strong C."/>
            <person name="Delehaunty K."/>
            <person name="Fronick C."/>
            <person name="Courtney B."/>
            <person name="Rock S.M."/>
            <person name="Belter E."/>
            <person name="Du F."/>
            <person name="Kim K."/>
            <person name="Abbott R.M."/>
            <person name="Cotton M."/>
            <person name="Levy A."/>
            <person name="Marchetto P."/>
            <person name="Ochoa K."/>
            <person name="Jackson S.M."/>
            <person name="Gillam B."/>
            <person name="Chen W."/>
            <person name="Yan L."/>
            <person name="Higginbotham J."/>
            <person name="Cardenas M."/>
            <person name="Waligorski J."/>
            <person name="Applebaum E."/>
            <person name="Phelps L."/>
            <person name="Falcone J."/>
            <person name="Kanchi K."/>
            <person name="Thane T."/>
            <person name="Scimone A."/>
            <person name="Thane N."/>
            <person name="Henke J."/>
            <person name="Wang T."/>
            <person name="Ruppert J."/>
            <person name="Shah N."/>
            <person name="Rotter K."/>
            <person name="Hodges J."/>
            <person name="Ingenthron E."/>
            <person name="Cordes M."/>
            <person name="Kohlberg S."/>
            <person name="Sgro J."/>
            <person name="Delgado B."/>
            <person name="Mead K."/>
            <person name="Chinwalla A."/>
            <person name="Leonard S."/>
            <person name="Crouse K."/>
            <person name="Collura K."/>
            <person name="Kudrna D."/>
            <person name="Currie J."/>
            <person name="He R."/>
            <person name="Angelova A."/>
            <person name="Rajasekar S."/>
            <person name="Mueller T."/>
            <person name="Lomeli R."/>
            <person name="Scara G."/>
            <person name="Ko A."/>
            <person name="Delaney K."/>
            <person name="Wissotski M."/>
            <person name="Lopez G."/>
            <person name="Campos D."/>
            <person name="Braidotti M."/>
            <person name="Ashley E."/>
            <person name="Golser W."/>
            <person name="Kim H."/>
            <person name="Lee S."/>
            <person name="Lin J."/>
            <person name="Dujmic Z."/>
            <person name="Kim W."/>
            <person name="Talag J."/>
            <person name="Zuccolo A."/>
            <person name="Fan C."/>
            <person name="Sebastian A."/>
            <person name="Kramer M."/>
            <person name="Spiegel L."/>
            <person name="Nascimento L."/>
            <person name="Zutavern T."/>
            <person name="Miller B."/>
            <person name="Ambroise C."/>
            <person name="Muller S."/>
            <person name="Spooner W."/>
            <person name="Narechania A."/>
            <person name="Ren L."/>
            <person name="Wei S."/>
            <person name="Kumari S."/>
            <person name="Faga B."/>
            <person name="Levy M.J."/>
            <person name="McMahan L."/>
            <person name="Van Buren P."/>
            <person name="Vaughn M.W."/>
            <person name="Ying K."/>
            <person name="Yeh C.-T."/>
            <person name="Emrich S.J."/>
            <person name="Jia Y."/>
            <person name="Kalyanaraman A."/>
            <person name="Hsia A.-P."/>
            <person name="Barbazuk W.B."/>
            <person name="Baucom R.S."/>
            <person name="Brutnell T.P."/>
            <person name="Carpita N.C."/>
            <person name="Chaparro C."/>
            <person name="Chia J.-M."/>
            <person name="Deragon J.-M."/>
            <person name="Estill J.C."/>
            <person name="Fu Y."/>
            <person name="Jeddeloh J.A."/>
            <person name="Han Y."/>
            <person name="Lee H."/>
            <person name="Li P."/>
            <person name="Lisch D.R."/>
            <person name="Liu S."/>
            <person name="Liu Z."/>
            <person name="Nagel D.H."/>
            <person name="McCann M.C."/>
            <person name="SanMiguel P."/>
            <person name="Myers A.M."/>
            <person name="Nettleton D."/>
            <person name="Nguyen J."/>
            <person name="Penning B.W."/>
            <person name="Ponnala L."/>
            <person name="Schneider K.L."/>
            <person name="Schwartz D.C."/>
            <person name="Sharma A."/>
            <person name="Soderlund C."/>
            <person name="Springer N.M."/>
            <person name="Sun Q."/>
            <person name="Wang H."/>
            <person name="Waterman M."/>
            <person name="Westerman R."/>
            <person name="Wolfgruber T.K."/>
            <person name="Yang L."/>
            <person name="Yu Y."/>
            <person name="Zhang L."/>
            <person name="Zhou S."/>
            <person name="Zhu Q."/>
            <person name="Bennetzen J.L."/>
            <person name="Dawe R.K."/>
            <person name="Jiang J."/>
            <person name="Jiang N."/>
            <person name="Presting G.G."/>
            <person name="Wessler S.R."/>
            <person name="Aluru S."/>
            <person name="Martienssen R.A."/>
            <person name="Clifton S.W."/>
            <person name="McCombie W.R."/>
            <person name="Wing R.A."/>
            <person name="Wilson R.K."/>
        </authorList>
    </citation>
    <scope>NUCLEOTIDE SEQUENCE [LARGE SCALE GENOMIC DNA]</scope>
    <source>
        <strain>cv. B73</strain>
    </source>
</reference>
<dbReference type="EC" id="2.1.1.103" evidence="2"/>
<dbReference type="EMBL" id="AY626156">
    <property type="protein sequence ID" value="AAV67950.1"/>
    <property type="status" value="ALT_SEQ"/>
    <property type="molecule type" value="mRNA"/>
</dbReference>
<dbReference type="EMBL" id="CM007649">
    <property type="protein sequence ID" value="ONM38976.1"/>
    <property type="molecule type" value="Genomic_DNA"/>
</dbReference>
<dbReference type="RefSeq" id="NP_001307897.1">
    <property type="nucleotide sequence ID" value="NM_001320968.1"/>
</dbReference>
<dbReference type="RefSeq" id="XP_008675144.1">
    <property type="nucleotide sequence ID" value="XM_008676922.1"/>
</dbReference>
<dbReference type="RefSeq" id="XP_008675145.1">
    <property type="nucleotide sequence ID" value="XM_008676923.1"/>
</dbReference>
<dbReference type="SMR" id="A0A1D6NER6"/>
<dbReference type="PaxDb" id="4577-GRMZM2G122296_P01"/>
<dbReference type="EnsemblPlants" id="Zm00001eb155940_T001">
    <property type="protein sequence ID" value="Zm00001eb155940_P001"/>
    <property type="gene ID" value="Zm00001eb155940"/>
</dbReference>
<dbReference type="EnsemblPlants" id="Zm00001eb155940_T002">
    <property type="protein sequence ID" value="Zm00001eb155940_P002"/>
    <property type="gene ID" value="Zm00001eb155940"/>
</dbReference>
<dbReference type="GeneID" id="103651303"/>
<dbReference type="Gramene" id="Zm00001eb155940_T001">
    <property type="protein sequence ID" value="Zm00001eb155940_P001"/>
    <property type="gene ID" value="Zm00001eb155940"/>
</dbReference>
<dbReference type="Gramene" id="Zm00001eb155940_T002">
    <property type="protein sequence ID" value="Zm00001eb155940_P002"/>
    <property type="gene ID" value="Zm00001eb155940"/>
</dbReference>
<dbReference type="KEGG" id="zma:103651303"/>
<dbReference type="MaizeGDB" id="9038441"/>
<dbReference type="eggNOG" id="KOG1269">
    <property type="taxonomic scope" value="Eukaryota"/>
</dbReference>
<dbReference type="OrthoDB" id="8300214at2759"/>
<dbReference type="BRENDA" id="2.1.1.103">
    <property type="organism ID" value="6752"/>
</dbReference>
<dbReference type="UniPathway" id="UPA00753">
    <property type="reaction ID" value="UER00738"/>
</dbReference>
<dbReference type="Proteomes" id="UP000007305">
    <property type="component" value="Chromosome 3"/>
</dbReference>
<dbReference type="ExpressionAtlas" id="A0A1D6NER6">
    <property type="expression patterns" value="baseline and differential"/>
</dbReference>
<dbReference type="GO" id="GO:0008170">
    <property type="term" value="F:N-methyltransferase activity"/>
    <property type="evidence" value="ECO:0000318"/>
    <property type="project" value="GO_Central"/>
</dbReference>
<dbReference type="GO" id="GO:0000234">
    <property type="term" value="F:phosphoethanolamine N-methyltransferase activity"/>
    <property type="evidence" value="ECO:0007669"/>
    <property type="project" value="InterPro"/>
</dbReference>
<dbReference type="GO" id="GO:0032259">
    <property type="term" value="P:methylation"/>
    <property type="evidence" value="ECO:0007669"/>
    <property type="project" value="UniProtKB-KW"/>
</dbReference>
<dbReference type="GO" id="GO:0006656">
    <property type="term" value="P:phosphatidylcholine biosynthetic process"/>
    <property type="evidence" value="ECO:0000318"/>
    <property type="project" value="GO_Central"/>
</dbReference>
<dbReference type="CDD" id="cd02440">
    <property type="entry name" value="AdoMet_MTases"/>
    <property type="match status" value="2"/>
</dbReference>
<dbReference type="Gene3D" id="3.40.50.150">
    <property type="entry name" value="Vaccinia Virus protein VP39"/>
    <property type="match status" value="2"/>
</dbReference>
<dbReference type="InterPro" id="IPR025714">
    <property type="entry name" value="Methyltranfer_dom"/>
</dbReference>
<dbReference type="InterPro" id="IPR041698">
    <property type="entry name" value="Methyltransf_25"/>
</dbReference>
<dbReference type="InterPro" id="IPR025771">
    <property type="entry name" value="Phosphoethanolamine_N-MeTrfase"/>
</dbReference>
<dbReference type="InterPro" id="IPR029063">
    <property type="entry name" value="SAM-dependent_MTases_sf"/>
</dbReference>
<dbReference type="PANTHER" id="PTHR44307">
    <property type="entry name" value="PHOSPHOETHANOLAMINE METHYLTRANSFERASE"/>
    <property type="match status" value="1"/>
</dbReference>
<dbReference type="PANTHER" id="PTHR44307:SF8">
    <property type="entry name" value="PHOSPHOETHANOLAMINE N-METHYLTRANSFERASE-RELATED"/>
    <property type="match status" value="1"/>
</dbReference>
<dbReference type="Pfam" id="PF13649">
    <property type="entry name" value="Methyltransf_25"/>
    <property type="match status" value="1"/>
</dbReference>
<dbReference type="Pfam" id="PF13847">
    <property type="entry name" value="Methyltransf_31"/>
    <property type="match status" value="1"/>
</dbReference>
<dbReference type="SUPFAM" id="SSF53335">
    <property type="entry name" value="S-adenosyl-L-methionine-dependent methyltransferases"/>
    <property type="match status" value="2"/>
</dbReference>
<dbReference type="PROSITE" id="PS51582">
    <property type="entry name" value="SAM_PEAMT"/>
    <property type="match status" value="1"/>
</dbReference>
<sequence length="501" mass="56882">MAAAAAAVNGSLDRLDVHERKAQKSYWEEHSGELNLEAIMLDSRAAELDKEERPEVLSLLPSYEGKSILELGAGIGRFTGELAKTSGHVFAVDFVESVIKKNGSINDHYGNTSFMCADVTSTDLMIEANSIDLIFSNWLLMYLSDEEIDKLVERMVKWLKVGGYIFFRESCFHQTGDTERKFNPTHYREPRFYTKVFKECQTFNQDGTSFKLSLITFKCIGAYVNIKKDQNQICWLWKKVNSSEDGGFQSFLDNVQYKATGILRYERIFGDGYVSTGGAETTKEFVEKLNLKPGQKVLDVGCGIGGGDFYMAEKYGTHVVGIDLSINMIMFALERSIGCKCLVEFEVADCTTKTYPDHMFDVIYSRDTILHIQDKPSLFKSFFKWLKPGGKVLISDYCKSPGKPSEEFATYIKQRGYDLHDVEAYGQMLKNAGFSHVIAEDRTDQFLSVLQKELDKFEKNKDDFLSEFAQEDYDDIVNGWKAKLQRSSAGEQRWGLFVATK</sequence>
<name>PEAM1_MAIZE</name>
<evidence type="ECO:0000250" key="1">
    <source>
        <dbReference type="UniProtKB" id="Q22993"/>
    </source>
</evidence>
<evidence type="ECO:0000250" key="2">
    <source>
        <dbReference type="UniProtKB" id="Q8VYX1"/>
    </source>
</evidence>
<evidence type="ECO:0000250" key="3">
    <source>
        <dbReference type="UniProtKB" id="Q9FR44"/>
    </source>
</evidence>
<evidence type="ECO:0000255" key="4">
    <source>
        <dbReference type="PROSITE-ProRule" id="PRU00915"/>
    </source>
</evidence>
<evidence type="ECO:0000269" key="5">
    <source>
    </source>
</evidence>
<evidence type="ECO:0000303" key="6">
    <source>
    </source>
</evidence>
<evidence type="ECO:0000305" key="7"/>
<evidence type="ECO:0000305" key="8">
    <source>
    </source>
</evidence>
<evidence type="ECO:0000312" key="9">
    <source>
        <dbReference type="EMBL" id="ONM38976.1"/>
    </source>
</evidence>